<reference key="1">
    <citation type="journal article" date="2010" name="Appl. Environ. Microbiol.">
        <title>Conserved symbiotic plasmid DNA sequences in the multireplicon pangenomic structure of Rhizobium etli.</title>
        <authorList>
            <person name="Gonzalez V."/>
            <person name="Acosta J.L."/>
            <person name="Santamaria R.I."/>
            <person name="Bustos P."/>
            <person name="Fernandez J.L."/>
            <person name="Hernandez Gonzalez I.L."/>
            <person name="Diaz R."/>
            <person name="Flores M."/>
            <person name="Palacios R."/>
            <person name="Mora J."/>
            <person name="Davila G."/>
        </authorList>
    </citation>
    <scope>NUCLEOTIDE SEQUENCE [LARGE SCALE GENOMIC DNA]</scope>
    <source>
        <strain>CIAT 652</strain>
    </source>
</reference>
<gene>
    <name evidence="1" type="primary">ispH</name>
    <name type="ordered locus">RHECIAT_CH0001056</name>
</gene>
<evidence type="ECO:0000255" key="1">
    <source>
        <dbReference type="HAMAP-Rule" id="MF_00191"/>
    </source>
</evidence>
<protein>
    <recommendedName>
        <fullName evidence="1">4-hydroxy-3-methylbut-2-enyl diphosphate reductase</fullName>
        <shortName evidence="1">HMBPP reductase</shortName>
        <ecNumber evidence="1">1.17.7.4</ecNumber>
    </recommendedName>
</protein>
<dbReference type="EC" id="1.17.7.4" evidence="1"/>
<dbReference type="EMBL" id="CP001074">
    <property type="protein sequence ID" value="ACE90041.1"/>
    <property type="molecule type" value="Genomic_DNA"/>
</dbReference>
<dbReference type="SMR" id="B3PSB9"/>
<dbReference type="KEGG" id="rec:RHECIAT_CH0001056"/>
<dbReference type="eggNOG" id="COG0761">
    <property type="taxonomic scope" value="Bacteria"/>
</dbReference>
<dbReference type="HOGENOM" id="CLU_027486_1_0_5"/>
<dbReference type="UniPathway" id="UPA00056">
    <property type="reaction ID" value="UER00097"/>
</dbReference>
<dbReference type="UniPathway" id="UPA00059">
    <property type="reaction ID" value="UER00105"/>
</dbReference>
<dbReference type="Proteomes" id="UP000008817">
    <property type="component" value="Chromosome"/>
</dbReference>
<dbReference type="GO" id="GO:0051539">
    <property type="term" value="F:4 iron, 4 sulfur cluster binding"/>
    <property type="evidence" value="ECO:0007669"/>
    <property type="project" value="UniProtKB-UniRule"/>
</dbReference>
<dbReference type="GO" id="GO:0051745">
    <property type="term" value="F:4-hydroxy-3-methylbut-2-enyl diphosphate reductase activity"/>
    <property type="evidence" value="ECO:0007669"/>
    <property type="project" value="UniProtKB-UniRule"/>
</dbReference>
<dbReference type="GO" id="GO:0046872">
    <property type="term" value="F:metal ion binding"/>
    <property type="evidence" value="ECO:0007669"/>
    <property type="project" value="UniProtKB-KW"/>
</dbReference>
<dbReference type="GO" id="GO:0050992">
    <property type="term" value="P:dimethylallyl diphosphate biosynthetic process"/>
    <property type="evidence" value="ECO:0007669"/>
    <property type="project" value="UniProtKB-UniRule"/>
</dbReference>
<dbReference type="GO" id="GO:0019288">
    <property type="term" value="P:isopentenyl diphosphate biosynthetic process, methylerythritol 4-phosphate pathway"/>
    <property type="evidence" value="ECO:0007669"/>
    <property type="project" value="UniProtKB-UniRule"/>
</dbReference>
<dbReference type="GO" id="GO:0016114">
    <property type="term" value="P:terpenoid biosynthetic process"/>
    <property type="evidence" value="ECO:0007669"/>
    <property type="project" value="UniProtKB-UniRule"/>
</dbReference>
<dbReference type="CDD" id="cd13944">
    <property type="entry name" value="lytB_ispH"/>
    <property type="match status" value="1"/>
</dbReference>
<dbReference type="Gene3D" id="3.40.50.11270">
    <property type="match status" value="1"/>
</dbReference>
<dbReference type="Gene3D" id="3.40.1010.20">
    <property type="entry name" value="4-hydroxy-3-methylbut-2-enyl diphosphate reductase, catalytic domain"/>
    <property type="match status" value="2"/>
</dbReference>
<dbReference type="HAMAP" id="MF_00191">
    <property type="entry name" value="IspH"/>
    <property type="match status" value="1"/>
</dbReference>
<dbReference type="InterPro" id="IPR003451">
    <property type="entry name" value="LytB/IspH"/>
</dbReference>
<dbReference type="NCBIfam" id="TIGR00216">
    <property type="entry name" value="ispH_lytB"/>
    <property type="match status" value="1"/>
</dbReference>
<dbReference type="NCBIfam" id="NF002190">
    <property type="entry name" value="PRK01045.1-4"/>
    <property type="match status" value="1"/>
</dbReference>
<dbReference type="PANTHER" id="PTHR30426">
    <property type="entry name" value="4-HYDROXY-3-METHYLBUT-2-ENYL DIPHOSPHATE REDUCTASE"/>
    <property type="match status" value="1"/>
</dbReference>
<dbReference type="PANTHER" id="PTHR30426:SF0">
    <property type="entry name" value="4-HYDROXY-3-METHYLBUT-2-ENYL DIPHOSPHATE REDUCTASE"/>
    <property type="match status" value="1"/>
</dbReference>
<dbReference type="Pfam" id="PF02401">
    <property type="entry name" value="LYTB"/>
    <property type="match status" value="1"/>
</dbReference>
<organism>
    <name type="scientific">Rhizobium etli (strain CIAT 652)</name>
    <dbReference type="NCBI Taxonomy" id="491916"/>
    <lineage>
        <taxon>Bacteria</taxon>
        <taxon>Pseudomonadati</taxon>
        <taxon>Pseudomonadota</taxon>
        <taxon>Alphaproteobacteria</taxon>
        <taxon>Hyphomicrobiales</taxon>
        <taxon>Rhizobiaceae</taxon>
        <taxon>Rhizobium/Agrobacterium group</taxon>
        <taxon>Rhizobium</taxon>
    </lineage>
</organism>
<accession>B3PSB9</accession>
<keyword id="KW-0004">4Fe-4S</keyword>
<keyword id="KW-0408">Iron</keyword>
<keyword id="KW-0411">Iron-sulfur</keyword>
<keyword id="KW-0414">Isoprene biosynthesis</keyword>
<keyword id="KW-0479">Metal-binding</keyword>
<keyword id="KW-0560">Oxidoreductase</keyword>
<comment type="function">
    <text evidence="1">Catalyzes the conversion of 1-hydroxy-2-methyl-2-(E)-butenyl 4-diphosphate (HMBPP) into a mixture of isopentenyl diphosphate (IPP) and dimethylallyl diphosphate (DMAPP). Acts in the terminal step of the DOXP/MEP pathway for isoprenoid precursor biosynthesis.</text>
</comment>
<comment type="catalytic activity">
    <reaction evidence="1">
        <text>isopentenyl diphosphate + 2 oxidized [2Fe-2S]-[ferredoxin] + H2O = (2E)-4-hydroxy-3-methylbut-2-enyl diphosphate + 2 reduced [2Fe-2S]-[ferredoxin] + 2 H(+)</text>
        <dbReference type="Rhea" id="RHEA:24488"/>
        <dbReference type="Rhea" id="RHEA-COMP:10000"/>
        <dbReference type="Rhea" id="RHEA-COMP:10001"/>
        <dbReference type="ChEBI" id="CHEBI:15377"/>
        <dbReference type="ChEBI" id="CHEBI:15378"/>
        <dbReference type="ChEBI" id="CHEBI:33737"/>
        <dbReference type="ChEBI" id="CHEBI:33738"/>
        <dbReference type="ChEBI" id="CHEBI:128753"/>
        <dbReference type="ChEBI" id="CHEBI:128769"/>
        <dbReference type="EC" id="1.17.7.4"/>
    </reaction>
</comment>
<comment type="catalytic activity">
    <reaction evidence="1">
        <text>dimethylallyl diphosphate + 2 oxidized [2Fe-2S]-[ferredoxin] + H2O = (2E)-4-hydroxy-3-methylbut-2-enyl diphosphate + 2 reduced [2Fe-2S]-[ferredoxin] + 2 H(+)</text>
        <dbReference type="Rhea" id="RHEA:24825"/>
        <dbReference type="Rhea" id="RHEA-COMP:10000"/>
        <dbReference type="Rhea" id="RHEA-COMP:10001"/>
        <dbReference type="ChEBI" id="CHEBI:15377"/>
        <dbReference type="ChEBI" id="CHEBI:15378"/>
        <dbReference type="ChEBI" id="CHEBI:33737"/>
        <dbReference type="ChEBI" id="CHEBI:33738"/>
        <dbReference type="ChEBI" id="CHEBI:57623"/>
        <dbReference type="ChEBI" id="CHEBI:128753"/>
        <dbReference type="EC" id="1.17.7.4"/>
    </reaction>
</comment>
<comment type="cofactor">
    <cofactor evidence="1">
        <name>[4Fe-4S] cluster</name>
        <dbReference type="ChEBI" id="CHEBI:49883"/>
    </cofactor>
    <text evidence="1">Binds 1 [4Fe-4S] cluster per subunit.</text>
</comment>
<comment type="pathway">
    <text evidence="1">Isoprenoid biosynthesis; dimethylallyl diphosphate biosynthesis; dimethylallyl diphosphate from (2E)-4-hydroxy-3-methylbutenyl diphosphate: step 1/1.</text>
</comment>
<comment type="pathway">
    <text evidence="1">Isoprenoid biosynthesis; isopentenyl diphosphate biosynthesis via DXP pathway; isopentenyl diphosphate from 1-deoxy-D-xylulose 5-phosphate: step 6/6.</text>
</comment>
<comment type="similarity">
    <text evidence="1">Belongs to the IspH family.</text>
</comment>
<proteinExistence type="inferred from homology"/>
<sequence>MNIAAKPPLTIRLCGPRGFCAGVDRAIQIVVLALKSYGAPVYVRHEIVHNRYVVEGLEAKGAVFVEELDEIPAEHRAQPVVFSAHGVPKSVPEDAASRNLFYLDATCPLVSKVHKQAMRHNRLGRHVVLIGHAGHPEVIGTMGQLPEGSVSLIETIEDADAYAPADPDNLGYVTQTTLSVDDTAGVIARLQQRFPNLTAPAADSICYATTNRQEVVKQAAPGCDLFIIVGAPNSSNSKRLVEVALRAGAKKSILVQRAAELDWDEIGAISTLGLSAGASAPEVIVNEIIEAFRARFDARVELAETVQETENFLVNRELRSIELTAADMAFVNG</sequence>
<name>ISPH_RHIE6</name>
<feature type="chain" id="PRO_1000098967" description="4-hydroxy-3-methylbut-2-enyl diphosphate reductase">
    <location>
        <begin position="1"/>
        <end position="333"/>
    </location>
</feature>
<feature type="active site" description="Proton donor" evidence="1">
    <location>
        <position position="137"/>
    </location>
</feature>
<feature type="binding site" evidence="1">
    <location>
        <position position="20"/>
    </location>
    <ligand>
        <name>[4Fe-4S] cluster</name>
        <dbReference type="ChEBI" id="CHEBI:49883"/>
    </ligand>
</feature>
<feature type="binding site" evidence="1">
    <location>
        <position position="49"/>
    </location>
    <ligand>
        <name>(2E)-4-hydroxy-3-methylbut-2-enyl diphosphate</name>
        <dbReference type="ChEBI" id="CHEBI:128753"/>
    </ligand>
</feature>
<feature type="binding site" evidence="1">
    <location>
        <position position="49"/>
    </location>
    <ligand>
        <name>dimethylallyl diphosphate</name>
        <dbReference type="ChEBI" id="CHEBI:57623"/>
    </ligand>
</feature>
<feature type="binding site" evidence="1">
    <location>
        <position position="49"/>
    </location>
    <ligand>
        <name>isopentenyl diphosphate</name>
        <dbReference type="ChEBI" id="CHEBI:128769"/>
    </ligand>
</feature>
<feature type="binding site" evidence="1">
    <location>
        <position position="85"/>
    </location>
    <ligand>
        <name>(2E)-4-hydroxy-3-methylbut-2-enyl diphosphate</name>
        <dbReference type="ChEBI" id="CHEBI:128753"/>
    </ligand>
</feature>
<feature type="binding site" evidence="1">
    <location>
        <position position="85"/>
    </location>
    <ligand>
        <name>dimethylallyl diphosphate</name>
        <dbReference type="ChEBI" id="CHEBI:57623"/>
    </ligand>
</feature>
<feature type="binding site" evidence="1">
    <location>
        <position position="85"/>
    </location>
    <ligand>
        <name>isopentenyl diphosphate</name>
        <dbReference type="ChEBI" id="CHEBI:128769"/>
    </ligand>
</feature>
<feature type="binding site" evidence="1">
    <location>
        <position position="107"/>
    </location>
    <ligand>
        <name>[4Fe-4S] cluster</name>
        <dbReference type="ChEBI" id="CHEBI:49883"/>
    </ligand>
</feature>
<feature type="binding site" evidence="1">
    <location>
        <position position="135"/>
    </location>
    <ligand>
        <name>(2E)-4-hydroxy-3-methylbut-2-enyl diphosphate</name>
        <dbReference type="ChEBI" id="CHEBI:128753"/>
    </ligand>
</feature>
<feature type="binding site" evidence="1">
    <location>
        <position position="135"/>
    </location>
    <ligand>
        <name>dimethylallyl diphosphate</name>
        <dbReference type="ChEBI" id="CHEBI:57623"/>
    </ligand>
</feature>
<feature type="binding site" evidence="1">
    <location>
        <position position="135"/>
    </location>
    <ligand>
        <name>isopentenyl diphosphate</name>
        <dbReference type="ChEBI" id="CHEBI:128769"/>
    </ligand>
</feature>
<feature type="binding site" evidence="1">
    <location>
        <position position="176"/>
    </location>
    <ligand>
        <name>(2E)-4-hydroxy-3-methylbut-2-enyl diphosphate</name>
        <dbReference type="ChEBI" id="CHEBI:128753"/>
    </ligand>
</feature>
<feature type="binding site" evidence="1">
    <location>
        <position position="206"/>
    </location>
    <ligand>
        <name>[4Fe-4S] cluster</name>
        <dbReference type="ChEBI" id="CHEBI:49883"/>
    </ligand>
</feature>
<feature type="binding site" evidence="1">
    <location>
        <position position="234"/>
    </location>
    <ligand>
        <name>(2E)-4-hydroxy-3-methylbut-2-enyl diphosphate</name>
        <dbReference type="ChEBI" id="CHEBI:128753"/>
    </ligand>
</feature>
<feature type="binding site" evidence="1">
    <location>
        <position position="234"/>
    </location>
    <ligand>
        <name>dimethylallyl diphosphate</name>
        <dbReference type="ChEBI" id="CHEBI:57623"/>
    </ligand>
</feature>
<feature type="binding site" evidence="1">
    <location>
        <position position="234"/>
    </location>
    <ligand>
        <name>isopentenyl diphosphate</name>
        <dbReference type="ChEBI" id="CHEBI:128769"/>
    </ligand>
</feature>
<feature type="binding site" evidence="1">
    <location>
        <position position="235"/>
    </location>
    <ligand>
        <name>(2E)-4-hydroxy-3-methylbut-2-enyl diphosphate</name>
        <dbReference type="ChEBI" id="CHEBI:128753"/>
    </ligand>
</feature>
<feature type="binding site" evidence="1">
    <location>
        <position position="235"/>
    </location>
    <ligand>
        <name>dimethylallyl diphosphate</name>
        <dbReference type="ChEBI" id="CHEBI:57623"/>
    </ligand>
</feature>
<feature type="binding site" evidence="1">
    <location>
        <position position="235"/>
    </location>
    <ligand>
        <name>isopentenyl diphosphate</name>
        <dbReference type="ChEBI" id="CHEBI:128769"/>
    </ligand>
</feature>
<feature type="binding site" evidence="1">
    <location>
        <position position="236"/>
    </location>
    <ligand>
        <name>(2E)-4-hydroxy-3-methylbut-2-enyl diphosphate</name>
        <dbReference type="ChEBI" id="CHEBI:128753"/>
    </ligand>
</feature>
<feature type="binding site" evidence="1">
    <location>
        <position position="236"/>
    </location>
    <ligand>
        <name>dimethylallyl diphosphate</name>
        <dbReference type="ChEBI" id="CHEBI:57623"/>
    </ligand>
</feature>
<feature type="binding site" evidence="1">
    <location>
        <position position="236"/>
    </location>
    <ligand>
        <name>isopentenyl diphosphate</name>
        <dbReference type="ChEBI" id="CHEBI:128769"/>
    </ligand>
</feature>
<feature type="binding site" evidence="1">
    <location>
        <position position="279"/>
    </location>
    <ligand>
        <name>(2E)-4-hydroxy-3-methylbut-2-enyl diphosphate</name>
        <dbReference type="ChEBI" id="CHEBI:128753"/>
    </ligand>
</feature>
<feature type="binding site" evidence="1">
    <location>
        <position position="279"/>
    </location>
    <ligand>
        <name>dimethylallyl diphosphate</name>
        <dbReference type="ChEBI" id="CHEBI:57623"/>
    </ligand>
</feature>
<feature type="binding site" evidence="1">
    <location>
        <position position="279"/>
    </location>
    <ligand>
        <name>isopentenyl diphosphate</name>
        <dbReference type="ChEBI" id="CHEBI:128769"/>
    </ligand>
</feature>